<keyword id="KW-0143">Chaperone</keyword>
<keyword id="KW-0963">Cytoplasm</keyword>
<keyword id="KW-0996">Nickel insertion</keyword>
<dbReference type="EMBL" id="AJ938182">
    <property type="protein sequence ID" value="CAI81853.1"/>
    <property type="molecule type" value="Genomic_DNA"/>
</dbReference>
<dbReference type="RefSeq" id="WP_000565250.1">
    <property type="nucleotide sequence ID" value="NC_007622.1"/>
</dbReference>
<dbReference type="SMR" id="Q2YYS9"/>
<dbReference type="KEGG" id="sab:SAB2164"/>
<dbReference type="HOGENOM" id="CLU_049215_4_2_9"/>
<dbReference type="GO" id="GO:0005737">
    <property type="term" value="C:cytoplasm"/>
    <property type="evidence" value="ECO:0007669"/>
    <property type="project" value="UniProtKB-SubCell"/>
</dbReference>
<dbReference type="GO" id="GO:0016151">
    <property type="term" value="F:nickel cation binding"/>
    <property type="evidence" value="ECO:0007669"/>
    <property type="project" value="UniProtKB-UniRule"/>
</dbReference>
<dbReference type="Gene3D" id="1.10.4190.10">
    <property type="entry name" value="Urease accessory protein UreF"/>
    <property type="match status" value="1"/>
</dbReference>
<dbReference type="HAMAP" id="MF_01385">
    <property type="entry name" value="UreF"/>
    <property type="match status" value="1"/>
</dbReference>
<dbReference type="InterPro" id="IPR002639">
    <property type="entry name" value="UreF"/>
</dbReference>
<dbReference type="InterPro" id="IPR038277">
    <property type="entry name" value="UreF_sf"/>
</dbReference>
<dbReference type="PANTHER" id="PTHR33620">
    <property type="entry name" value="UREASE ACCESSORY PROTEIN F"/>
    <property type="match status" value="1"/>
</dbReference>
<dbReference type="PANTHER" id="PTHR33620:SF1">
    <property type="entry name" value="UREASE ACCESSORY PROTEIN F"/>
    <property type="match status" value="1"/>
</dbReference>
<dbReference type="Pfam" id="PF01730">
    <property type="entry name" value="UreF"/>
    <property type="match status" value="1"/>
</dbReference>
<dbReference type="PIRSF" id="PIRSF009467">
    <property type="entry name" value="Ureas_acces_UreF"/>
    <property type="match status" value="1"/>
</dbReference>
<protein>
    <recommendedName>
        <fullName evidence="1">Urease accessory protein UreF</fullName>
    </recommendedName>
</protein>
<accession>Q2YYS9</accession>
<organism>
    <name type="scientific">Staphylococcus aureus (strain bovine RF122 / ET3-1)</name>
    <dbReference type="NCBI Taxonomy" id="273036"/>
    <lineage>
        <taxon>Bacteria</taxon>
        <taxon>Bacillati</taxon>
        <taxon>Bacillota</taxon>
        <taxon>Bacilli</taxon>
        <taxon>Bacillales</taxon>
        <taxon>Staphylococcaceae</taxon>
        <taxon>Staphylococcus</taxon>
    </lineage>
</organism>
<sequence length="229" mass="26560">MIDHTHLRLFQFCDSQFPTGAFSHSFGLETYIQRNIIHDDHTFIAWLKMFLQEQLTYSDGLAMRLVYDALENDDTQKVLHIDKLMFVQNLPKETRVGAKQMGTRIVKLALELYNSPWIAWYHQQMQDKKAKLNPAICFTMLGHYLGVDIETIIDYYLYQNVSSLTQNAVRAIPLGQTAGQKIVTHMIPYIEETRKQIFELKEADFGMTAPGLELNQMAHENVNVRIFIS</sequence>
<comment type="function">
    <text evidence="1">Required for maturation of urease via the functional incorporation of the urease nickel metallocenter.</text>
</comment>
<comment type="subunit">
    <text evidence="1">UreD, UreF and UreG form a complex that acts as a GTP-hydrolysis-dependent molecular chaperone, activating the urease apoprotein by helping to assemble the nickel containing metallocenter of UreC. The UreE protein probably delivers the nickel.</text>
</comment>
<comment type="subcellular location">
    <subcellularLocation>
        <location evidence="1">Cytoplasm</location>
    </subcellularLocation>
</comment>
<comment type="similarity">
    <text evidence="1">Belongs to the UreF family.</text>
</comment>
<reference key="1">
    <citation type="journal article" date="2007" name="PLoS ONE">
        <title>Molecular correlates of host specialization in Staphylococcus aureus.</title>
        <authorList>
            <person name="Herron-Olson L."/>
            <person name="Fitzgerald J.R."/>
            <person name="Musser J.M."/>
            <person name="Kapur V."/>
        </authorList>
    </citation>
    <scope>NUCLEOTIDE SEQUENCE [LARGE SCALE GENOMIC DNA]</scope>
    <source>
        <strain>bovine RF122 / ET3-1</strain>
    </source>
</reference>
<evidence type="ECO:0000255" key="1">
    <source>
        <dbReference type="HAMAP-Rule" id="MF_01385"/>
    </source>
</evidence>
<proteinExistence type="inferred from homology"/>
<gene>
    <name evidence="1" type="primary">ureF</name>
    <name type="ordered locus">SAB2164</name>
</gene>
<name>UREF_STAAB</name>
<feature type="chain" id="PRO_0000344179" description="Urease accessory protein UreF">
    <location>
        <begin position="1"/>
        <end position="229"/>
    </location>
</feature>